<comment type="function">
    <text evidence="1">Suppresses neurite outgrowth.</text>
</comment>
<comment type="interaction">
    <interactant intactId="EBI-20855537">
        <id>O94933</id>
    </interactant>
    <interactant intactId="EBI-720609">
        <id>O76024</id>
        <label>WFS1</label>
    </interactant>
    <organismsDiffer>false</organismsDiffer>
    <experiments>3</experiments>
</comment>
<comment type="subcellular location">
    <subcellularLocation>
        <location evidence="5">Membrane</location>
        <topology evidence="5">Single-pass type I membrane protein</topology>
    </subcellularLocation>
</comment>
<comment type="tissue specificity">
    <text evidence="4">Expressed in the occipital lobe of the cerebral cortex of the brain. Expressed at higher levels in some astrocytic brain tumors such as astrocytomas, oligodendrogliomas, glioblastomas, gangliogliomas and primitive neuroectodermal tumors.</text>
</comment>
<comment type="similarity">
    <text evidence="5">Belongs to the SLITRK family.</text>
</comment>
<comment type="sequence caution" evidence="5">
    <conflict type="erroneous initiation">
        <sequence resource="EMBL-CDS" id="BAA74871"/>
    </conflict>
</comment>
<gene>
    <name type="primary">SLITRK3</name>
    <name type="synonym">KIAA0848</name>
</gene>
<keyword id="KW-0325">Glycoprotein</keyword>
<keyword id="KW-0433">Leucine-rich repeat</keyword>
<keyword id="KW-0472">Membrane</keyword>
<keyword id="KW-1267">Proteomics identification</keyword>
<keyword id="KW-1185">Reference proteome</keyword>
<keyword id="KW-0677">Repeat</keyword>
<keyword id="KW-0732">Signal</keyword>
<keyword id="KW-0812">Transmembrane</keyword>
<keyword id="KW-1133">Transmembrane helix</keyword>
<accession>O94933</accession>
<accession>Q1RMY6</accession>
<evidence type="ECO:0000250" key="1"/>
<evidence type="ECO:0000255" key="2"/>
<evidence type="ECO:0000256" key="3">
    <source>
        <dbReference type="SAM" id="MobiDB-lite"/>
    </source>
</evidence>
<evidence type="ECO:0000269" key="4">
    <source>
    </source>
</evidence>
<evidence type="ECO:0000305" key="5"/>
<name>SLIK3_HUMAN</name>
<dbReference type="EMBL" id="AB020655">
    <property type="protein sequence ID" value="BAA74871.2"/>
    <property type="status" value="ALT_INIT"/>
    <property type="molecule type" value="mRNA"/>
</dbReference>
<dbReference type="EMBL" id="AK290024">
    <property type="protein sequence ID" value="BAF82713.1"/>
    <property type="molecule type" value="mRNA"/>
</dbReference>
<dbReference type="EMBL" id="CH471052">
    <property type="protein sequence ID" value="EAW78599.1"/>
    <property type="molecule type" value="Genomic_DNA"/>
</dbReference>
<dbReference type="EMBL" id="BC114621">
    <property type="protein sequence ID" value="AAI14622.1"/>
    <property type="molecule type" value="mRNA"/>
</dbReference>
<dbReference type="CCDS" id="CCDS3197.1"/>
<dbReference type="RefSeq" id="NP_001305739.1">
    <property type="nucleotide sequence ID" value="NM_001318810.2"/>
</dbReference>
<dbReference type="RefSeq" id="NP_001305740.1">
    <property type="nucleotide sequence ID" value="NM_001318811.2"/>
</dbReference>
<dbReference type="RefSeq" id="NP_055741.2">
    <property type="nucleotide sequence ID" value="NM_014926.3"/>
</dbReference>
<dbReference type="SMR" id="O94933"/>
<dbReference type="BioGRID" id="116533">
    <property type="interactions" value="20"/>
</dbReference>
<dbReference type="FunCoup" id="O94933">
    <property type="interactions" value="266"/>
</dbReference>
<dbReference type="IntAct" id="O94933">
    <property type="interactions" value="18"/>
</dbReference>
<dbReference type="STRING" id="9606.ENSP00000420091"/>
<dbReference type="GlyCosmos" id="O94933">
    <property type="glycosylation" value="2 sites, No reported glycans"/>
</dbReference>
<dbReference type="GlyGen" id="O94933">
    <property type="glycosylation" value="3 sites, 2 N-linked glycans (2 sites)"/>
</dbReference>
<dbReference type="iPTMnet" id="O94933"/>
<dbReference type="PhosphoSitePlus" id="O94933"/>
<dbReference type="BioMuta" id="SLITRK3"/>
<dbReference type="jPOST" id="O94933"/>
<dbReference type="MassIVE" id="O94933"/>
<dbReference type="PaxDb" id="9606-ENSP00000420091"/>
<dbReference type="PeptideAtlas" id="O94933"/>
<dbReference type="ProteomicsDB" id="50569"/>
<dbReference type="Antibodypedia" id="2998">
    <property type="antibodies" value="111 antibodies from 25 providers"/>
</dbReference>
<dbReference type="DNASU" id="22865"/>
<dbReference type="Ensembl" id="ENST00000241274.3">
    <property type="protein sequence ID" value="ENSP00000241274.3"/>
    <property type="gene ID" value="ENSG00000121871.4"/>
</dbReference>
<dbReference type="Ensembl" id="ENST00000475390.2">
    <property type="protein sequence ID" value="ENSP00000420091.1"/>
    <property type="gene ID" value="ENSG00000121871.4"/>
</dbReference>
<dbReference type="GeneID" id="22865"/>
<dbReference type="KEGG" id="hsa:22865"/>
<dbReference type="MANE-Select" id="ENST00000475390.2">
    <property type="protein sequence ID" value="ENSP00000420091.1"/>
    <property type="RefSeq nucleotide sequence ID" value="NM_001318810.2"/>
    <property type="RefSeq protein sequence ID" value="NP_001305739.1"/>
</dbReference>
<dbReference type="UCSC" id="uc003fej.4">
    <property type="organism name" value="human"/>
</dbReference>
<dbReference type="AGR" id="HGNC:23501"/>
<dbReference type="CTD" id="22865"/>
<dbReference type="DisGeNET" id="22865"/>
<dbReference type="GeneCards" id="SLITRK3"/>
<dbReference type="HGNC" id="HGNC:23501">
    <property type="gene designation" value="SLITRK3"/>
</dbReference>
<dbReference type="HPA" id="ENSG00000121871">
    <property type="expression patterns" value="Tissue enhanced (brain, fallopian tube, liver)"/>
</dbReference>
<dbReference type="MIM" id="609679">
    <property type="type" value="gene"/>
</dbReference>
<dbReference type="neXtProt" id="NX_O94933"/>
<dbReference type="OpenTargets" id="ENSG00000121871"/>
<dbReference type="PharmGKB" id="PA134958002"/>
<dbReference type="VEuPathDB" id="HostDB:ENSG00000121871"/>
<dbReference type="eggNOG" id="ENOG502QYY5">
    <property type="taxonomic scope" value="Eukaryota"/>
</dbReference>
<dbReference type="GeneTree" id="ENSGT00940000158681"/>
<dbReference type="HOGENOM" id="CLU_012706_0_0_1"/>
<dbReference type="InParanoid" id="O94933"/>
<dbReference type="OMA" id="TLHKGRM"/>
<dbReference type="OrthoDB" id="676979at2759"/>
<dbReference type="PAN-GO" id="O94933">
    <property type="GO annotations" value="4 GO annotations based on evolutionary models"/>
</dbReference>
<dbReference type="PhylomeDB" id="O94933"/>
<dbReference type="TreeFam" id="TF351826"/>
<dbReference type="PathwayCommons" id="O94933"/>
<dbReference type="Reactome" id="R-HSA-388844">
    <property type="pathway name" value="Receptor-type tyrosine-protein phosphatases"/>
</dbReference>
<dbReference type="Reactome" id="R-HSA-9013423">
    <property type="pathway name" value="RAC3 GTPase cycle"/>
</dbReference>
<dbReference type="SignaLink" id="O94933"/>
<dbReference type="BioGRID-ORCS" id="22865">
    <property type="hits" value="8 hits in 1139 CRISPR screens"/>
</dbReference>
<dbReference type="GenomeRNAi" id="22865"/>
<dbReference type="Pharos" id="O94933">
    <property type="development level" value="Tbio"/>
</dbReference>
<dbReference type="PRO" id="PR:O94933"/>
<dbReference type="Proteomes" id="UP000005640">
    <property type="component" value="Chromosome 3"/>
</dbReference>
<dbReference type="RNAct" id="O94933">
    <property type="molecule type" value="protein"/>
</dbReference>
<dbReference type="Bgee" id="ENSG00000121871">
    <property type="expression patterns" value="Expressed in left uterine tube and 112 other cell types or tissues"/>
</dbReference>
<dbReference type="ExpressionAtlas" id="O94933">
    <property type="expression patterns" value="baseline and differential"/>
</dbReference>
<dbReference type="GO" id="GO:0009986">
    <property type="term" value="C:cell surface"/>
    <property type="evidence" value="ECO:0007669"/>
    <property type="project" value="Ensembl"/>
</dbReference>
<dbReference type="GO" id="GO:0098982">
    <property type="term" value="C:GABA-ergic synapse"/>
    <property type="evidence" value="ECO:0000314"/>
    <property type="project" value="SynGO"/>
</dbReference>
<dbReference type="GO" id="GO:0005886">
    <property type="term" value="C:plasma membrane"/>
    <property type="evidence" value="ECO:0000304"/>
    <property type="project" value="Reactome"/>
</dbReference>
<dbReference type="GO" id="GO:0098839">
    <property type="term" value="C:postsynaptic density membrane"/>
    <property type="evidence" value="ECO:0000318"/>
    <property type="project" value="GO_Central"/>
</dbReference>
<dbReference type="GO" id="GO:0099634">
    <property type="term" value="C:postsynaptic specialization membrane"/>
    <property type="evidence" value="ECO:0000314"/>
    <property type="project" value="SynGO"/>
</dbReference>
<dbReference type="GO" id="GO:0007409">
    <property type="term" value="P:axonogenesis"/>
    <property type="evidence" value="ECO:0000318"/>
    <property type="project" value="GO_Central"/>
</dbReference>
<dbReference type="GO" id="GO:0097116">
    <property type="term" value="P:gephyrin clustering involved in postsynaptic density assembly"/>
    <property type="evidence" value="ECO:0007669"/>
    <property type="project" value="Ensembl"/>
</dbReference>
<dbReference type="GO" id="GO:0072578">
    <property type="term" value="P:neurotransmitter-gated ion channel clustering"/>
    <property type="evidence" value="ECO:0007669"/>
    <property type="project" value="Ensembl"/>
</dbReference>
<dbReference type="GO" id="GO:0051965">
    <property type="term" value="P:positive regulation of synapse assembly"/>
    <property type="evidence" value="ECO:0000318"/>
    <property type="project" value="GO_Central"/>
</dbReference>
<dbReference type="GO" id="GO:1905606">
    <property type="term" value="P:regulation of presynapse assembly"/>
    <property type="evidence" value="ECO:0000314"/>
    <property type="project" value="SynGO"/>
</dbReference>
<dbReference type="GO" id="GO:0099560">
    <property type="term" value="P:synaptic membrane adhesion"/>
    <property type="evidence" value="ECO:0000314"/>
    <property type="project" value="SynGO"/>
</dbReference>
<dbReference type="GO" id="GO:0051932">
    <property type="term" value="P:synaptic transmission, GABAergic"/>
    <property type="evidence" value="ECO:0007669"/>
    <property type="project" value="Ensembl"/>
</dbReference>
<dbReference type="GO" id="GO:0072553">
    <property type="term" value="P:terminal button organization"/>
    <property type="evidence" value="ECO:0007669"/>
    <property type="project" value="Ensembl"/>
</dbReference>
<dbReference type="FunFam" id="3.80.10.10:FF:000001">
    <property type="entry name" value="SLIT and NTRK-like family, member 1"/>
    <property type="match status" value="2"/>
</dbReference>
<dbReference type="Gene3D" id="3.80.10.10">
    <property type="entry name" value="Ribonuclease Inhibitor"/>
    <property type="match status" value="2"/>
</dbReference>
<dbReference type="InterPro" id="IPR000483">
    <property type="entry name" value="Cys-rich_flank_reg_C"/>
</dbReference>
<dbReference type="InterPro" id="IPR001611">
    <property type="entry name" value="Leu-rich_rpt"/>
</dbReference>
<dbReference type="InterPro" id="IPR003591">
    <property type="entry name" value="Leu-rich_rpt_typical-subtyp"/>
</dbReference>
<dbReference type="InterPro" id="IPR032675">
    <property type="entry name" value="LRR_dom_sf"/>
</dbReference>
<dbReference type="PANTHER" id="PTHR45773:SF6">
    <property type="entry name" value="SLIT AND NTRK-LIKE PROTEIN 3"/>
    <property type="match status" value="1"/>
</dbReference>
<dbReference type="PANTHER" id="PTHR45773">
    <property type="entry name" value="SLIT AND NTRK-LIKE PROTEIN 4-RELATED"/>
    <property type="match status" value="1"/>
</dbReference>
<dbReference type="Pfam" id="PF13855">
    <property type="entry name" value="LRR_8"/>
    <property type="match status" value="2"/>
</dbReference>
<dbReference type="SMART" id="SM00369">
    <property type="entry name" value="LRR_TYP"/>
    <property type="match status" value="9"/>
</dbReference>
<dbReference type="SMART" id="SM00082">
    <property type="entry name" value="LRRCT"/>
    <property type="match status" value="2"/>
</dbReference>
<dbReference type="SUPFAM" id="SSF52058">
    <property type="entry name" value="L domain-like"/>
    <property type="match status" value="2"/>
</dbReference>
<proteinExistence type="evidence at protein level"/>
<organism>
    <name type="scientific">Homo sapiens</name>
    <name type="common">Human</name>
    <dbReference type="NCBI Taxonomy" id="9606"/>
    <lineage>
        <taxon>Eukaryota</taxon>
        <taxon>Metazoa</taxon>
        <taxon>Chordata</taxon>
        <taxon>Craniata</taxon>
        <taxon>Vertebrata</taxon>
        <taxon>Euteleostomi</taxon>
        <taxon>Mammalia</taxon>
        <taxon>Eutheria</taxon>
        <taxon>Euarchontoglires</taxon>
        <taxon>Primates</taxon>
        <taxon>Haplorrhini</taxon>
        <taxon>Catarrhini</taxon>
        <taxon>Hominidae</taxon>
        <taxon>Homo</taxon>
    </lineage>
</organism>
<protein>
    <recommendedName>
        <fullName>SLIT and NTRK-like protein 3</fullName>
    </recommendedName>
</protein>
<reference key="1">
    <citation type="journal article" date="1998" name="DNA Res.">
        <title>Prediction of the coding sequences of unidentified human genes. XII. The complete sequences of 100 new cDNA clones from brain which code for large proteins in vitro.</title>
        <authorList>
            <person name="Nagase T."/>
            <person name="Ishikawa K."/>
            <person name="Suyama M."/>
            <person name="Kikuno R."/>
            <person name="Hirosawa M."/>
            <person name="Miyajima N."/>
            <person name="Tanaka A."/>
            <person name="Kotani H."/>
            <person name="Nomura N."/>
            <person name="Ohara O."/>
        </authorList>
    </citation>
    <scope>NUCLEOTIDE SEQUENCE [LARGE SCALE MRNA]</scope>
    <source>
        <tissue>Brain</tissue>
    </source>
</reference>
<reference key="2">
    <citation type="journal article" date="2004" name="Nat. Genet.">
        <title>Complete sequencing and characterization of 21,243 full-length human cDNAs.</title>
        <authorList>
            <person name="Ota T."/>
            <person name="Suzuki Y."/>
            <person name="Nishikawa T."/>
            <person name="Otsuki T."/>
            <person name="Sugiyama T."/>
            <person name="Irie R."/>
            <person name="Wakamatsu A."/>
            <person name="Hayashi K."/>
            <person name="Sato H."/>
            <person name="Nagai K."/>
            <person name="Kimura K."/>
            <person name="Makita H."/>
            <person name="Sekine M."/>
            <person name="Obayashi M."/>
            <person name="Nishi T."/>
            <person name="Shibahara T."/>
            <person name="Tanaka T."/>
            <person name="Ishii S."/>
            <person name="Yamamoto J."/>
            <person name="Saito K."/>
            <person name="Kawai Y."/>
            <person name="Isono Y."/>
            <person name="Nakamura Y."/>
            <person name="Nagahari K."/>
            <person name="Murakami K."/>
            <person name="Yasuda T."/>
            <person name="Iwayanagi T."/>
            <person name="Wagatsuma M."/>
            <person name="Shiratori A."/>
            <person name="Sudo H."/>
            <person name="Hosoiri T."/>
            <person name="Kaku Y."/>
            <person name="Kodaira H."/>
            <person name="Kondo H."/>
            <person name="Sugawara M."/>
            <person name="Takahashi M."/>
            <person name="Kanda K."/>
            <person name="Yokoi T."/>
            <person name="Furuya T."/>
            <person name="Kikkawa E."/>
            <person name="Omura Y."/>
            <person name="Abe K."/>
            <person name="Kamihara K."/>
            <person name="Katsuta N."/>
            <person name="Sato K."/>
            <person name="Tanikawa M."/>
            <person name="Yamazaki M."/>
            <person name="Ninomiya K."/>
            <person name="Ishibashi T."/>
            <person name="Yamashita H."/>
            <person name="Murakawa K."/>
            <person name="Fujimori K."/>
            <person name="Tanai H."/>
            <person name="Kimata M."/>
            <person name="Watanabe M."/>
            <person name="Hiraoka S."/>
            <person name="Chiba Y."/>
            <person name="Ishida S."/>
            <person name="Ono Y."/>
            <person name="Takiguchi S."/>
            <person name="Watanabe S."/>
            <person name="Yosida M."/>
            <person name="Hotuta T."/>
            <person name="Kusano J."/>
            <person name="Kanehori K."/>
            <person name="Takahashi-Fujii A."/>
            <person name="Hara H."/>
            <person name="Tanase T.-O."/>
            <person name="Nomura Y."/>
            <person name="Togiya S."/>
            <person name="Komai F."/>
            <person name="Hara R."/>
            <person name="Takeuchi K."/>
            <person name="Arita M."/>
            <person name="Imose N."/>
            <person name="Musashino K."/>
            <person name="Yuuki H."/>
            <person name="Oshima A."/>
            <person name="Sasaki N."/>
            <person name="Aotsuka S."/>
            <person name="Yoshikawa Y."/>
            <person name="Matsunawa H."/>
            <person name="Ichihara T."/>
            <person name="Shiohata N."/>
            <person name="Sano S."/>
            <person name="Moriya S."/>
            <person name="Momiyama H."/>
            <person name="Satoh N."/>
            <person name="Takami S."/>
            <person name="Terashima Y."/>
            <person name="Suzuki O."/>
            <person name="Nakagawa S."/>
            <person name="Senoh A."/>
            <person name="Mizoguchi H."/>
            <person name="Goto Y."/>
            <person name="Shimizu F."/>
            <person name="Wakebe H."/>
            <person name="Hishigaki H."/>
            <person name="Watanabe T."/>
            <person name="Sugiyama A."/>
            <person name="Takemoto M."/>
            <person name="Kawakami B."/>
            <person name="Yamazaki M."/>
            <person name="Watanabe K."/>
            <person name="Kumagai A."/>
            <person name="Itakura S."/>
            <person name="Fukuzumi Y."/>
            <person name="Fujimori Y."/>
            <person name="Komiyama M."/>
            <person name="Tashiro H."/>
            <person name="Tanigami A."/>
            <person name="Fujiwara T."/>
            <person name="Ono T."/>
            <person name="Yamada K."/>
            <person name="Fujii Y."/>
            <person name="Ozaki K."/>
            <person name="Hirao M."/>
            <person name="Ohmori Y."/>
            <person name="Kawabata A."/>
            <person name="Hikiji T."/>
            <person name="Kobatake N."/>
            <person name="Inagaki H."/>
            <person name="Ikema Y."/>
            <person name="Okamoto S."/>
            <person name="Okitani R."/>
            <person name="Kawakami T."/>
            <person name="Noguchi S."/>
            <person name="Itoh T."/>
            <person name="Shigeta K."/>
            <person name="Senba T."/>
            <person name="Matsumura K."/>
            <person name="Nakajima Y."/>
            <person name="Mizuno T."/>
            <person name="Morinaga M."/>
            <person name="Sasaki M."/>
            <person name="Togashi T."/>
            <person name="Oyama M."/>
            <person name="Hata H."/>
            <person name="Watanabe M."/>
            <person name="Komatsu T."/>
            <person name="Mizushima-Sugano J."/>
            <person name="Satoh T."/>
            <person name="Shirai Y."/>
            <person name="Takahashi Y."/>
            <person name="Nakagawa K."/>
            <person name="Okumura K."/>
            <person name="Nagase T."/>
            <person name="Nomura N."/>
            <person name="Kikuchi H."/>
            <person name="Masuho Y."/>
            <person name="Yamashita R."/>
            <person name="Nakai K."/>
            <person name="Yada T."/>
            <person name="Nakamura Y."/>
            <person name="Ohara O."/>
            <person name="Isogai T."/>
            <person name="Sugano S."/>
        </authorList>
    </citation>
    <scope>NUCLEOTIDE SEQUENCE [LARGE SCALE MRNA]</scope>
    <source>
        <tissue>Hippocampus</tissue>
    </source>
</reference>
<reference key="3">
    <citation type="submission" date="2005-09" db="EMBL/GenBank/DDBJ databases">
        <authorList>
            <person name="Mural R.J."/>
            <person name="Istrail S."/>
            <person name="Sutton G.G."/>
            <person name="Florea L."/>
            <person name="Halpern A.L."/>
            <person name="Mobarry C.M."/>
            <person name="Lippert R."/>
            <person name="Walenz B."/>
            <person name="Shatkay H."/>
            <person name="Dew I."/>
            <person name="Miller J.R."/>
            <person name="Flanigan M.J."/>
            <person name="Edwards N.J."/>
            <person name="Bolanos R."/>
            <person name="Fasulo D."/>
            <person name="Halldorsson B.V."/>
            <person name="Hannenhalli S."/>
            <person name="Turner R."/>
            <person name="Yooseph S."/>
            <person name="Lu F."/>
            <person name="Nusskern D.R."/>
            <person name="Shue B.C."/>
            <person name="Zheng X.H."/>
            <person name="Zhong F."/>
            <person name="Delcher A.L."/>
            <person name="Huson D.H."/>
            <person name="Kravitz S.A."/>
            <person name="Mouchard L."/>
            <person name="Reinert K."/>
            <person name="Remington K.A."/>
            <person name="Clark A.G."/>
            <person name="Waterman M.S."/>
            <person name="Eichler E.E."/>
            <person name="Adams M.D."/>
            <person name="Hunkapiller M.W."/>
            <person name="Myers E.W."/>
            <person name="Venter J.C."/>
        </authorList>
    </citation>
    <scope>NUCLEOTIDE SEQUENCE [LARGE SCALE GENOMIC DNA]</scope>
</reference>
<reference key="4">
    <citation type="journal article" date="2004" name="Genome Res.">
        <title>The status, quality, and expansion of the NIH full-length cDNA project: the Mammalian Gene Collection (MGC).</title>
        <authorList>
            <consortium name="The MGC Project Team"/>
        </authorList>
    </citation>
    <scope>NUCLEOTIDE SEQUENCE [LARGE SCALE MRNA]</scope>
</reference>
<reference key="5">
    <citation type="journal article" date="2003" name="Gene">
        <title>Human SLITRK family genes: genomic organization and expression profiling in normal brain and brain tumor tissue.</title>
        <authorList>
            <person name="Aruga J."/>
            <person name="Yokota N."/>
            <person name="Mikoshiba K."/>
        </authorList>
    </citation>
    <scope>IDENTIFICATION</scope>
    <scope>TISSUE SPECIFICITY</scope>
    <source>
        <tissue>Brain</tissue>
        <tissue>Brain tumor</tissue>
    </source>
</reference>
<feature type="signal peptide" evidence="2">
    <location>
        <begin position="1"/>
        <end position="26"/>
    </location>
</feature>
<feature type="chain" id="PRO_0000032677" description="SLIT and NTRK-like protein 3">
    <location>
        <begin position="27"/>
        <end position="977"/>
    </location>
</feature>
<feature type="topological domain" description="Extracellular" evidence="2">
    <location>
        <begin position="29"/>
        <end position="654"/>
    </location>
</feature>
<feature type="transmembrane region" description="Helical" evidence="2">
    <location>
        <begin position="655"/>
        <end position="675"/>
    </location>
</feature>
<feature type="topological domain" description="Cytoplasmic" evidence="2">
    <location>
        <begin position="676"/>
        <end position="977"/>
    </location>
</feature>
<feature type="repeat" description="LRR 1">
    <location>
        <begin position="78"/>
        <end position="99"/>
    </location>
</feature>
<feature type="repeat" description="LRR 2">
    <location>
        <begin position="102"/>
        <end position="123"/>
    </location>
</feature>
<feature type="repeat" description="LRR 3">
    <location>
        <begin position="126"/>
        <end position="147"/>
    </location>
</feature>
<feature type="repeat" description="LRR 4">
    <location>
        <begin position="150"/>
        <end position="171"/>
    </location>
</feature>
<feature type="repeat" description="LRR 5">
    <location>
        <begin position="174"/>
        <end position="195"/>
    </location>
</feature>
<feature type="repeat" description="LRR 6">
    <location>
        <begin position="197"/>
        <end position="218"/>
    </location>
</feature>
<feature type="domain" description="LRRCT 1">
    <location>
        <begin position="232"/>
        <end position="283"/>
    </location>
</feature>
<feature type="domain" description="LRRNT">
    <location>
        <begin position="364"/>
        <end position="406"/>
    </location>
</feature>
<feature type="repeat" description="LRR 7">
    <location>
        <begin position="409"/>
        <end position="430"/>
    </location>
</feature>
<feature type="repeat" description="LRR 8">
    <location>
        <begin position="433"/>
        <end position="454"/>
    </location>
</feature>
<feature type="repeat" description="LRR 9">
    <location>
        <begin position="457"/>
        <end position="478"/>
    </location>
</feature>
<feature type="repeat" description="LRR 10">
    <location>
        <begin position="481"/>
        <end position="502"/>
    </location>
</feature>
<feature type="repeat" description="LRR 11">
    <location>
        <begin position="505"/>
        <end position="526"/>
    </location>
</feature>
<feature type="repeat" description="LRR 12">
    <location>
        <begin position="528"/>
        <end position="549"/>
    </location>
</feature>
<feature type="domain" description="LRRCT 2">
    <location>
        <begin position="562"/>
        <end position="613"/>
    </location>
</feature>
<feature type="region of interest" description="Disordered" evidence="3">
    <location>
        <begin position="325"/>
        <end position="360"/>
    </location>
</feature>
<feature type="region of interest" description="Disordered" evidence="3">
    <location>
        <begin position="708"/>
        <end position="735"/>
    </location>
</feature>
<feature type="region of interest" description="Disordered" evidence="3">
    <location>
        <begin position="761"/>
        <end position="790"/>
    </location>
</feature>
<feature type="compositionally biased region" description="Gly residues" evidence="3">
    <location>
        <begin position="711"/>
        <end position="724"/>
    </location>
</feature>
<feature type="compositionally biased region" description="Low complexity" evidence="3">
    <location>
        <begin position="765"/>
        <end position="775"/>
    </location>
</feature>
<feature type="glycosylation site" description="N-linked (GlcNAc...) asparagine" evidence="2">
    <location>
        <position position="68"/>
    </location>
</feature>
<feature type="glycosylation site" description="N-linked (GlcNAc...) asparagine" evidence="2">
    <location>
        <position position="596"/>
    </location>
</feature>
<feature type="sequence variant" id="VAR_027757" description="In dbSNP:rs3828419.">
    <original>I</original>
    <variation>V</variation>
    <location>
        <position position="605"/>
    </location>
</feature>
<feature type="sequence conflict" description="In Ref. 1; BAA74871." evidence="5" ref="1">
    <original>G</original>
    <variation>E</variation>
    <location>
        <position position="940"/>
    </location>
</feature>
<sequence length="977" mass="108934">MKPSIAEMLHRGRMLWIILLSTIALGWTTPIPLIEDSEEIDEPCFDPCYCEVKESLFHIHCDSKGFTNISQITEFWSRPFKLYLQRNSMRKLYTNSFLHLNNAVSINLGNNALQDIQTGAFNGLKILKRLYLHENKLDVFRNDTFLGLESLEYLQADYNVIKRIESGAFRNLSKLRVLILNDNLIPMLPTNLFKAVSLTHLDLRGNRLKVLFYRGMLDHIGRSLMELQLEENPWNCTCEIVQLKSWLERIPYTALVGDITCETPFHFHGKDLREIRKTELCPLLSDSEVEASLGIPHSSSSKENAWPTKPSSMLSSVHFTASSVEYKSSNKQPKPTKQPRTPRPPSTSQALYPGPNQPPIAPYQTRPPIPIICPTGCTCNLHINDLGLTVNCKERGFNNISELLPRPLNAKKLYLSSNLIQKIYRSDFWNFSSLDLLHLGNNRISYVQDGAFINLPNLKSLFLNGNDIEKLTPGMFRGLQSLHYLYFEFNVIREIQPAAFSLMPNLKLLFLNNNLLRTLPTDAFAGTSLARLNLRKNYFLYLPVAGVLEHLNAIVQIDLNENPWDCTCDLVPFKQWIETISSVSVVGDVLCRSPENLTHRDVRTIELEVLCPEMLHVAPAGESPAQPGDSHLIGAPTSASPYEFSPPGGPVPLSVLILSLLVLFFSAVFVAAGLFAYVLRRRRKKLPFRSKRQEGVDLTGIQMQCHRLFEDGGGGGGGSGGGGRPTLSSPEKAPPVGHVYEYIPHPVTQMCNNPIYKPREEEEVAVSSAQEAGSAERGGPGTQPPGMGEALLGSEQFAETPKENHSNYRTLLEKEKEWALAVSSSQLNTIVTVNHHHPHHPAVGGVSGVVGGTGGDLAGFRHHEKNGGVVLFPPGGGCGSGSMLLDRERPQPAPCTVGFVDCLYGTVPKLKELHVHPPGMQYPDLQQDARLKETLLFSAGKGFTDHQTQKSDYLELRAKLQTKPDYLEVLEKTTYRF</sequence>